<proteinExistence type="inferred from homology"/>
<evidence type="ECO:0000255" key="1">
    <source>
        <dbReference type="HAMAP-Rule" id="MF_00375"/>
    </source>
</evidence>
<dbReference type="EC" id="5.4.3.8" evidence="1"/>
<dbReference type="EMBL" id="CP001287">
    <property type="protein sequence ID" value="ACK66374.1"/>
    <property type="molecule type" value="Genomic_DNA"/>
</dbReference>
<dbReference type="RefSeq" id="WP_012595642.1">
    <property type="nucleotide sequence ID" value="NC_011726.1"/>
</dbReference>
<dbReference type="SMR" id="B7K2I1"/>
<dbReference type="STRING" id="41431.PCC8801_2361"/>
<dbReference type="KEGG" id="cyp:PCC8801_2361"/>
<dbReference type="eggNOG" id="COG0001">
    <property type="taxonomic scope" value="Bacteria"/>
</dbReference>
<dbReference type="HOGENOM" id="CLU_016922_1_5_3"/>
<dbReference type="OrthoDB" id="9807885at2"/>
<dbReference type="UniPathway" id="UPA00251">
    <property type="reaction ID" value="UER00317"/>
</dbReference>
<dbReference type="UniPathway" id="UPA00668"/>
<dbReference type="Proteomes" id="UP000008204">
    <property type="component" value="Chromosome"/>
</dbReference>
<dbReference type="GO" id="GO:0005737">
    <property type="term" value="C:cytoplasm"/>
    <property type="evidence" value="ECO:0007669"/>
    <property type="project" value="UniProtKB-SubCell"/>
</dbReference>
<dbReference type="GO" id="GO:0042286">
    <property type="term" value="F:glutamate-1-semialdehyde 2,1-aminomutase activity"/>
    <property type="evidence" value="ECO:0007669"/>
    <property type="project" value="UniProtKB-UniRule"/>
</dbReference>
<dbReference type="GO" id="GO:0030170">
    <property type="term" value="F:pyridoxal phosphate binding"/>
    <property type="evidence" value="ECO:0007669"/>
    <property type="project" value="InterPro"/>
</dbReference>
<dbReference type="GO" id="GO:0008483">
    <property type="term" value="F:transaminase activity"/>
    <property type="evidence" value="ECO:0007669"/>
    <property type="project" value="InterPro"/>
</dbReference>
<dbReference type="GO" id="GO:0015995">
    <property type="term" value="P:chlorophyll biosynthetic process"/>
    <property type="evidence" value="ECO:0007669"/>
    <property type="project" value="UniProtKB-UniRule"/>
</dbReference>
<dbReference type="GO" id="GO:0006782">
    <property type="term" value="P:protoporphyrinogen IX biosynthetic process"/>
    <property type="evidence" value="ECO:0007669"/>
    <property type="project" value="UniProtKB-UniRule"/>
</dbReference>
<dbReference type="CDD" id="cd00610">
    <property type="entry name" value="OAT_like"/>
    <property type="match status" value="1"/>
</dbReference>
<dbReference type="FunFam" id="3.40.640.10:FF:000021">
    <property type="entry name" value="Glutamate-1-semialdehyde 2,1-aminomutase"/>
    <property type="match status" value="1"/>
</dbReference>
<dbReference type="Gene3D" id="3.90.1150.10">
    <property type="entry name" value="Aspartate Aminotransferase, domain 1"/>
    <property type="match status" value="1"/>
</dbReference>
<dbReference type="Gene3D" id="3.40.640.10">
    <property type="entry name" value="Type I PLP-dependent aspartate aminotransferase-like (Major domain)"/>
    <property type="match status" value="1"/>
</dbReference>
<dbReference type="HAMAP" id="MF_00375">
    <property type="entry name" value="HemL_aminotrans_3"/>
    <property type="match status" value="1"/>
</dbReference>
<dbReference type="InterPro" id="IPR004639">
    <property type="entry name" value="4pyrrol_synth_GluAld_NH2Trfase"/>
</dbReference>
<dbReference type="InterPro" id="IPR005814">
    <property type="entry name" value="Aminotrans_3"/>
</dbReference>
<dbReference type="InterPro" id="IPR049704">
    <property type="entry name" value="Aminotrans_3_PPA_site"/>
</dbReference>
<dbReference type="InterPro" id="IPR015424">
    <property type="entry name" value="PyrdxlP-dep_Trfase"/>
</dbReference>
<dbReference type="InterPro" id="IPR015421">
    <property type="entry name" value="PyrdxlP-dep_Trfase_major"/>
</dbReference>
<dbReference type="InterPro" id="IPR015422">
    <property type="entry name" value="PyrdxlP-dep_Trfase_small"/>
</dbReference>
<dbReference type="NCBIfam" id="TIGR00713">
    <property type="entry name" value="hemL"/>
    <property type="match status" value="1"/>
</dbReference>
<dbReference type="NCBIfam" id="NF000818">
    <property type="entry name" value="PRK00062.1"/>
    <property type="match status" value="1"/>
</dbReference>
<dbReference type="PANTHER" id="PTHR43713">
    <property type="entry name" value="GLUTAMATE-1-SEMIALDEHYDE 2,1-AMINOMUTASE"/>
    <property type="match status" value="1"/>
</dbReference>
<dbReference type="PANTHER" id="PTHR43713:SF3">
    <property type="entry name" value="GLUTAMATE-1-SEMIALDEHYDE 2,1-AMINOMUTASE 1, CHLOROPLASTIC-RELATED"/>
    <property type="match status" value="1"/>
</dbReference>
<dbReference type="Pfam" id="PF00202">
    <property type="entry name" value="Aminotran_3"/>
    <property type="match status" value="1"/>
</dbReference>
<dbReference type="SUPFAM" id="SSF53383">
    <property type="entry name" value="PLP-dependent transferases"/>
    <property type="match status" value="1"/>
</dbReference>
<dbReference type="PROSITE" id="PS00600">
    <property type="entry name" value="AA_TRANSFER_CLASS_3"/>
    <property type="match status" value="1"/>
</dbReference>
<gene>
    <name evidence="1" type="primary">hemL</name>
    <name type="ordered locus">PCC8801_2361</name>
</gene>
<feature type="chain" id="PRO_1000121876" description="Glutamate-1-semialdehyde 2,1-aminomutase">
    <location>
        <begin position="1"/>
        <end position="433"/>
    </location>
</feature>
<feature type="modified residue" description="N6-(pyridoxal phosphate)lysine" evidence="1">
    <location>
        <position position="273"/>
    </location>
</feature>
<keyword id="KW-0149">Chlorophyll biosynthesis</keyword>
<keyword id="KW-0963">Cytoplasm</keyword>
<keyword id="KW-0413">Isomerase</keyword>
<keyword id="KW-0627">Porphyrin biosynthesis</keyword>
<keyword id="KW-0663">Pyridoxal phosphate</keyword>
<keyword id="KW-1185">Reference proteome</keyword>
<protein>
    <recommendedName>
        <fullName evidence="1">Glutamate-1-semialdehyde 2,1-aminomutase</fullName>
        <shortName evidence="1">GSA</shortName>
        <ecNumber evidence="1">5.4.3.8</ecNumber>
    </recommendedName>
    <alternativeName>
        <fullName evidence="1">Glutamate-1-semialdehyde aminotransferase</fullName>
        <shortName evidence="1">GSA-AT</shortName>
    </alternativeName>
</protein>
<organism>
    <name type="scientific">Rippkaea orientalis (strain PCC 8801 / RF-1)</name>
    <name type="common">Cyanothece sp. (strain PCC 8801)</name>
    <dbReference type="NCBI Taxonomy" id="41431"/>
    <lineage>
        <taxon>Bacteria</taxon>
        <taxon>Bacillati</taxon>
        <taxon>Cyanobacteriota</taxon>
        <taxon>Cyanophyceae</taxon>
        <taxon>Oscillatoriophycideae</taxon>
        <taxon>Chroococcales</taxon>
        <taxon>Aphanothecaceae</taxon>
        <taxon>Rippkaea</taxon>
        <taxon>Rippkaea orientalis</taxon>
    </lineage>
</organism>
<comment type="catalytic activity">
    <reaction evidence="1">
        <text>(S)-4-amino-5-oxopentanoate = 5-aminolevulinate</text>
        <dbReference type="Rhea" id="RHEA:14265"/>
        <dbReference type="ChEBI" id="CHEBI:57501"/>
        <dbReference type="ChEBI" id="CHEBI:356416"/>
        <dbReference type="EC" id="5.4.3.8"/>
    </reaction>
</comment>
<comment type="cofactor">
    <cofactor evidence="1">
        <name>pyridoxal 5'-phosphate</name>
        <dbReference type="ChEBI" id="CHEBI:597326"/>
    </cofactor>
</comment>
<comment type="pathway">
    <text evidence="1">Porphyrin-containing compound metabolism; protoporphyrin-IX biosynthesis; 5-aminolevulinate from L-glutamyl-tRNA(Glu): step 2/2.</text>
</comment>
<comment type="pathway">
    <text evidence="1">Porphyrin-containing compound metabolism; chlorophyll biosynthesis.</text>
</comment>
<comment type="subunit">
    <text evidence="1">Homodimer.</text>
</comment>
<comment type="subcellular location">
    <subcellularLocation>
        <location evidence="1">Cytoplasm</location>
    </subcellularLocation>
</comment>
<comment type="similarity">
    <text evidence="1">Belongs to the class-III pyridoxal-phosphate-dependent aminotransferase family. HemL subfamily.</text>
</comment>
<reference key="1">
    <citation type="journal article" date="2011" name="MBio">
        <title>Novel metabolic attributes of the genus Cyanothece, comprising a group of unicellular nitrogen-fixing Cyanobacteria.</title>
        <authorList>
            <person name="Bandyopadhyay A."/>
            <person name="Elvitigala T."/>
            <person name="Welsh E."/>
            <person name="Stockel J."/>
            <person name="Liberton M."/>
            <person name="Min H."/>
            <person name="Sherman L.A."/>
            <person name="Pakrasi H.B."/>
        </authorList>
    </citation>
    <scope>NUCLEOTIDE SEQUENCE [LARGE SCALE GENOMIC DNA]</scope>
    <source>
        <strain>PCC 8801 / RF-1</strain>
    </source>
</reference>
<sequence length="433" mass="46084">MVSTSSFQTTKSEEIFAAAQKLMPGGVSSPVRAFKSVGGQPIVFDRVKGAYIWDVDGNQYIDYVGTWGPAICGHAHPDVIAALHEALEKGTSFGAPSVQENILAEMVIEAVPSIEMVRFVNSGTEACMSVLRLMRAFTGREKIIKFEGCYHGHADMFLVKAGSGVATLGLPDSPGVPKATTSFTLTAPYNDLEAVKALFAENPDDIAGVILEPVVGNSGFVLPDAGFLEGLRELTKEYGALLMFDEVMTGFRLAYGGAQEKFGVTPDLTTLGKVIGGGLPVGAYGGRQDIMEMVAPSGPMYQAGTLSGNPLAMTAGIKTLELLQKPGTYDYLNDITQKLADGLLKLAQDAGHAVCGGHIGAMFGLFLTAGPVHNYEDAKKSDLVKFGRFHRAMLERGVYLAPSQFEAGFTSLAHTQADIDRTLAMAKEVFSHL</sequence>
<accession>B7K2I1</accession>
<name>GSA_RIPO1</name>